<comment type="function">
    <text evidence="1">Core subunit of the mitochondrial membrane respiratory chain NADH dehydrogenase (Complex I) which catalyzes electron transfer from NADH through the respiratory chain, using ubiquinone as an electron acceptor. Part of the enzyme membrane arm which is embedded in the lipid bilayer and involved in proton translocation.</text>
</comment>
<comment type="catalytic activity">
    <reaction evidence="1">
        <text>a ubiquinone + NADH + 5 H(+)(in) = a ubiquinol + NAD(+) + 4 H(+)(out)</text>
        <dbReference type="Rhea" id="RHEA:29091"/>
        <dbReference type="Rhea" id="RHEA-COMP:9565"/>
        <dbReference type="Rhea" id="RHEA-COMP:9566"/>
        <dbReference type="ChEBI" id="CHEBI:15378"/>
        <dbReference type="ChEBI" id="CHEBI:16389"/>
        <dbReference type="ChEBI" id="CHEBI:17976"/>
        <dbReference type="ChEBI" id="CHEBI:57540"/>
        <dbReference type="ChEBI" id="CHEBI:57945"/>
        <dbReference type="EC" id="7.1.1.2"/>
    </reaction>
    <physiologicalReaction direction="left-to-right" evidence="1">
        <dbReference type="Rhea" id="RHEA:29092"/>
    </physiologicalReaction>
</comment>
<comment type="subunit">
    <text evidence="2">Core subunit of respiratory chain NADH dehydrogenase (Complex I) which is composed of 45 different subunits.</text>
</comment>
<comment type="subcellular location">
    <subcellularLocation>
        <location evidence="2">Mitochondrion inner membrane</location>
        <topology evidence="3">Multi-pass membrane protein</topology>
    </subcellularLocation>
</comment>
<comment type="similarity">
    <text evidence="4">Belongs to the complex I subunit 4L family.</text>
</comment>
<organism>
    <name type="scientific">Danio rerio</name>
    <name type="common">Zebrafish</name>
    <name type="synonym">Brachydanio rerio</name>
    <dbReference type="NCBI Taxonomy" id="7955"/>
    <lineage>
        <taxon>Eukaryota</taxon>
        <taxon>Metazoa</taxon>
        <taxon>Chordata</taxon>
        <taxon>Craniata</taxon>
        <taxon>Vertebrata</taxon>
        <taxon>Euteleostomi</taxon>
        <taxon>Actinopterygii</taxon>
        <taxon>Neopterygii</taxon>
        <taxon>Teleostei</taxon>
        <taxon>Ostariophysi</taxon>
        <taxon>Cypriniformes</taxon>
        <taxon>Danionidae</taxon>
        <taxon>Danioninae</taxon>
        <taxon>Danio</taxon>
    </lineage>
</organism>
<keyword id="KW-0249">Electron transport</keyword>
<keyword id="KW-0472">Membrane</keyword>
<keyword id="KW-0496">Mitochondrion</keyword>
<keyword id="KW-0999">Mitochondrion inner membrane</keyword>
<keyword id="KW-0520">NAD</keyword>
<keyword id="KW-1185">Reference proteome</keyword>
<keyword id="KW-0679">Respiratory chain</keyword>
<keyword id="KW-1278">Translocase</keyword>
<keyword id="KW-0812">Transmembrane</keyword>
<keyword id="KW-1133">Transmembrane helix</keyword>
<keyword id="KW-0813">Transport</keyword>
<keyword id="KW-0830">Ubiquinone</keyword>
<sequence>MTPTHFSLNAAFMLGLAGLTFHRVHLLSALLCLEGMMLSLFISMALWTLKTESMSLSTAPMLLLAFSACEASAGLALLVATARTHGSDHMKNLNLLQC</sequence>
<dbReference type="EC" id="7.1.1.2"/>
<dbReference type="EMBL" id="AC024175">
    <property type="protein sequence ID" value="AAF74305.1"/>
    <property type="molecule type" value="Genomic_DNA"/>
</dbReference>
<dbReference type="RefSeq" id="NP_059339.1">
    <property type="nucleotide sequence ID" value="NC_002333.2"/>
</dbReference>
<dbReference type="SMR" id="Q9MIY2"/>
<dbReference type="FunCoup" id="Q9MIY2">
    <property type="interactions" value="210"/>
</dbReference>
<dbReference type="STRING" id="7955.ENSDARP00000087877"/>
<dbReference type="PaxDb" id="7955-ENSDARP00000087877"/>
<dbReference type="Ensembl" id="ENSDART00000093617">
    <property type="protein sequence ID" value="ENSDARP00000087877"/>
    <property type="gene ID" value="ENSDARG00000063916"/>
</dbReference>
<dbReference type="GeneID" id="140538"/>
<dbReference type="KEGG" id="dre:140538"/>
<dbReference type="AGR" id="ZFIN:ZDB-GENE-011205-11"/>
<dbReference type="CTD" id="4539"/>
<dbReference type="eggNOG" id="KOG4669">
    <property type="taxonomic scope" value="Eukaryota"/>
</dbReference>
<dbReference type="HOGENOM" id="CLU_182394_0_0_1"/>
<dbReference type="InParanoid" id="Q9MIY2"/>
<dbReference type="OMA" id="MYRSHLM"/>
<dbReference type="OrthoDB" id="6146597at2759"/>
<dbReference type="PhylomeDB" id="Q9MIY2"/>
<dbReference type="TreeFam" id="TF338190"/>
<dbReference type="PRO" id="PR:Q9MIY2"/>
<dbReference type="Proteomes" id="UP000000437">
    <property type="component" value="Mitochondrion MT"/>
</dbReference>
<dbReference type="Bgee" id="ENSDARG00000063916">
    <property type="expression patterns" value="Expressed in early embryo and 20 other cell types or tissues"/>
</dbReference>
<dbReference type="ExpressionAtlas" id="Q9MIY2">
    <property type="expression patterns" value="baseline"/>
</dbReference>
<dbReference type="GO" id="GO:0005743">
    <property type="term" value="C:mitochondrial inner membrane"/>
    <property type="evidence" value="ECO:0000250"/>
    <property type="project" value="UniProtKB"/>
</dbReference>
<dbReference type="GO" id="GO:0045271">
    <property type="term" value="C:respiratory chain complex I"/>
    <property type="evidence" value="ECO:0000250"/>
    <property type="project" value="UniProtKB"/>
</dbReference>
<dbReference type="GO" id="GO:0008137">
    <property type="term" value="F:NADH dehydrogenase (ubiquinone) activity"/>
    <property type="evidence" value="ECO:0000250"/>
    <property type="project" value="UniProtKB"/>
</dbReference>
<dbReference type="GO" id="GO:0042773">
    <property type="term" value="P:ATP synthesis coupled electron transport"/>
    <property type="evidence" value="ECO:0007669"/>
    <property type="project" value="InterPro"/>
</dbReference>
<dbReference type="FunFam" id="1.10.287.3510:FF:000002">
    <property type="entry name" value="NADH-ubiquinone oxidoreductase chain 4L"/>
    <property type="match status" value="1"/>
</dbReference>
<dbReference type="Gene3D" id="1.10.287.3510">
    <property type="match status" value="1"/>
</dbReference>
<dbReference type="InterPro" id="IPR001133">
    <property type="entry name" value="NADH_UbQ_OxRdtase_chain4L/K"/>
</dbReference>
<dbReference type="InterPro" id="IPR039428">
    <property type="entry name" value="NUOK/Mnh_C1-like"/>
</dbReference>
<dbReference type="PANTHER" id="PTHR11434:SF0">
    <property type="entry name" value="NADH-UBIQUINONE OXIDOREDUCTASE CHAIN 4L"/>
    <property type="match status" value="1"/>
</dbReference>
<dbReference type="PANTHER" id="PTHR11434">
    <property type="entry name" value="NADH-UBIQUINONE OXIDOREDUCTASE SUBUNIT ND4L"/>
    <property type="match status" value="1"/>
</dbReference>
<dbReference type="Pfam" id="PF00420">
    <property type="entry name" value="Oxidored_q2"/>
    <property type="match status" value="1"/>
</dbReference>
<proteinExistence type="inferred from homology"/>
<gene>
    <name type="primary">mt-nd4l</name>
    <name type="synonym">mtnd4l</name>
    <name type="synonym">nd4l</name>
</gene>
<accession>Q9MIY2</accession>
<protein>
    <recommendedName>
        <fullName>NADH-ubiquinone oxidoreductase chain 4L</fullName>
        <ecNumber>7.1.1.2</ecNumber>
    </recommendedName>
    <alternativeName>
        <fullName>NADH dehydrogenase subunit 4L</fullName>
    </alternativeName>
</protein>
<geneLocation type="mitochondrion"/>
<reference key="1">
    <citation type="journal article" date="2001" name="Genome Res.">
        <title>The complete sequence of the zebrafish (Danio rerio) mitochondrial genome and evolutionary patterns in vertebrate mitochondrial DNA.</title>
        <authorList>
            <person name="Broughton R.E."/>
            <person name="Milam J.E."/>
            <person name="Roe B.A."/>
        </authorList>
    </citation>
    <scope>NUCLEOTIDE SEQUENCE [LARGE SCALE GENOMIC DNA]</scope>
    <source>
        <strain evidence="5">Tuebingen</strain>
    </source>
</reference>
<name>NU4LM_DANRE</name>
<feature type="chain" id="PRO_0000118399" description="NADH-ubiquinone oxidoreductase chain 4L">
    <location>
        <begin position="1"/>
        <end position="98"/>
    </location>
</feature>
<feature type="transmembrane region" description="Helical" evidence="3">
    <location>
        <begin position="1"/>
        <end position="21"/>
    </location>
</feature>
<feature type="transmembrane region" description="Helical" evidence="3">
    <location>
        <begin position="26"/>
        <end position="46"/>
    </location>
</feature>
<feature type="transmembrane region" description="Helical" evidence="3">
    <location>
        <begin position="59"/>
        <end position="79"/>
    </location>
</feature>
<evidence type="ECO:0000250" key="1">
    <source>
        <dbReference type="UniProtKB" id="P03901"/>
    </source>
</evidence>
<evidence type="ECO:0000250" key="2">
    <source>
        <dbReference type="UniProtKB" id="P03902"/>
    </source>
</evidence>
<evidence type="ECO:0000255" key="3"/>
<evidence type="ECO:0000305" key="4"/>
<evidence type="ECO:0000312" key="5">
    <source>
        <dbReference type="Proteomes" id="UP000000437"/>
    </source>
</evidence>